<feature type="transit peptide" description="Mitochondrion" evidence="2">
    <location>
        <begin position="1"/>
        <end position="37"/>
    </location>
</feature>
<feature type="chain" id="PRO_0000301783" description="RNA-binding protein RMD9, mitochondrial">
    <location>
        <begin position="38"/>
        <end position="616"/>
    </location>
</feature>
<feature type="region of interest" description="Disordered" evidence="3">
    <location>
        <begin position="34"/>
        <end position="53"/>
    </location>
</feature>
<feature type="region of interest" description="Disordered" evidence="3">
    <location>
        <begin position="60"/>
        <end position="79"/>
    </location>
</feature>
<reference key="1">
    <citation type="journal article" date="2004" name="Nature">
        <title>Genome evolution in yeasts.</title>
        <authorList>
            <person name="Dujon B."/>
            <person name="Sherman D."/>
            <person name="Fischer G."/>
            <person name="Durrens P."/>
            <person name="Casaregola S."/>
            <person name="Lafontaine I."/>
            <person name="de Montigny J."/>
            <person name="Marck C."/>
            <person name="Neuveglise C."/>
            <person name="Talla E."/>
            <person name="Goffard N."/>
            <person name="Frangeul L."/>
            <person name="Aigle M."/>
            <person name="Anthouard V."/>
            <person name="Babour A."/>
            <person name="Barbe V."/>
            <person name="Barnay S."/>
            <person name="Blanchin S."/>
            <person name="Beckerich J.-M."/>
            <person name="Beyne E."/>
            <person name="Bleykasten C."/>
            <person name="Boisrame A."/>
            <person name="Boyer J."/>
            <person name="Cattolico L."/>
            <person name="Confanioleri F."/>
            <person name="de Daruvar A."/>
            <person name="Despons L."/>
            <person name="Fabre E."/>
            <person name="Fairhead C."/>
            <person name="Ferry-Dumazet H."/>
            <person name="Groppi A."/>
            <person name="Hantraye F."/>
            <person name="Hennequin C."/>
            <person name="Jauniaux N."/>
            <person name="Joyet P."/>
            <person name="Kachouri R."/>
            <person name="Kerrest A."/>
            <person name="Koszul R."/>
            <person name="Lemaire M."/>
            <person name="Lesur I."/>
            <person name="Ma L."/>
            <person name="Muller H."/>
            <person name="Nicaud J.-M."/>
            <person name="Nikolski M."/>
            <person name="Oztas S."/>
            <person name="Ozier-Kalogeropoulos O."/>
            <person name="Pellenz S."/>
            <person name="Potier S."/>
            <person name="Richard G.-F."/>
            <person name="Straub M.-L."/>
            <person name="Suleau A."/>
            <person name="Swennen D."/>
            <person name="Tekaia F."/>
            <person name="Wesolowski-Louvel M."/>
            <person name="Westhof E."/>
            <person name="Wirth B."/>
            <person name="Zeniou-Meyer M."/>
            <person name="Zivanovic Y."/>
            <person name="Bolotin-Fukuhara M."/>
            <person name="Thierry A."/>
            <person name="Bouchier C."/>
            <person name="Caudron B."/>
            <person name="Scarpelli C."/>
            <person name="Gaillardin C."/>
            <person name="Weissenbach J."/>
            <person name="Wincker P."/>
            <person name="Souciet J.-L."/>
        </authorList>
    </citation>
    <scope>NUCLEOTIDE SEQUENCE [LARGE SCALE GENOMIC DNA]</scope>
    <source>
        <strain>ATCC 2001 / BCRC 20586 / JCM 3761 / NBRC 0622 / NRRL Y-65 / CBS 138</strain>
    </source>
</reference>
<name>RMD9_CANGA</name>
<gene>
    <name type="primary">RMD9</name>
    <name type="ordered locus">CAGL0F07469g</name>
</gene>
<sequence>MFRYLSRTSTIYKGVIATSKTASTANVVAAQESRRNYANKRNNNRNGPADALDEKLNSILSGKTSSKRKPYGGRKSPVDETSPWYAQLCALDDCLTTTLKQSATPMRKLLSDRVNHPDMRSNPTFWHSVSRAMTLYNELKQCPEMTDQRVTSLVHLLHNGLRTDRQLVSSLNKKPDYDSQSFHKEMVNFIYTSLNEISDDILNNNVPINANGLMHLFTSYQEMGFTDLVVQIWKKIETIAEQNPQSNIGKISKHPNVVGIVLPILYEKEIVNFSEAEKLFKECEQYHNRMFPNLYVGMILTSLKANENMKALELFETLCTNSKGVHYGYISETHIAFISQCKDISVAESFLDKAVNNEMPYRVEIQVSAVNSLMYNIWSENQDFNKIKEIWQKMVTFYGENNLRLAIFSSLNNEFFSYFFEKYKENKTEGLEQLQKLITQYNNLKGIDEPFLNIILAKCTVWKEPEVIKYIEKNFELFNVPKSLITSRILLKSLGSIDNITKEQIVERWQEIVLKADSLGSKYIANADWAALRDATVKWAQENKDNQESLDRIEWYLQIVNVYQKYCRDGSQRYRILKGCSKSFPILAENLQRLDLVDTSSIPVCEVKSLKEALQN</sequence>
<protein>
    <recommendedName>
        <fullName evidence="1">RNA-binding protein RMD9, mitochondrial</fullName>
    </recommendedName>
</protein>
<proteinExistence type="inferred from homology"/>
<keyword id="KW-0472">Membrane</keyword>
<keyword id="KW-0496">Mitochondrion</keyword>
<keyword id="KW-0999">Mitochondrion inner membrane</keyword>
<keyword id="KW-0597">Phosphoprotein</keyword>
<keyword id="KW-1185">Reference proteome</keyword>
<keyword id="KW-0749">Sporulation</keyword>
<keyword id="KW-0809">Transit peptide</keyword>
<dbReference type="EMBL" id="CR380952">
    <property type="protein sequence ID" value="CAG59216.1"/>
    <property type="molecule type" value="Genomic_DNA"/>
</dbReference>
<dbReference type="RefSeq" id="XP_446292.1">
    <property type="nucleotide sequence ID" value="XM_446292.1"/>
</dbReference>
<dbReference type="SMR" id="Q6FU02"/>
<dbReference type="STRING" id="284593.Q6FU02"/>
<dbReference type="EnsemblFungi" id="CAGL0F07469g-T">
    <property type="protein sequence ID" value="CAGL0F07469g-T-p1"/>
    <property type="gene ID" value="CAGL0F07469g"/>
</dbReference>
<dbReference type="KEGG" id="cgr:2887885"/>
<dbReference type="CGD" id="CAL0131290">
    <property type="gene designation" value="CAGL0F07469g"/>
</dbReference>
<dbReference type="VEuPathDB" id="FungiDB:B1J91_F07469g"/>
<dbReference type="VEuPathDB" id="FungiDB:CAGL0F07469g"/>
<dbReference type="eggNOG" id="ENOG502QUSW">
    <property type="taxonomic scope" value="Eukaryota"/>
</dbReference>
<dbReference type="HOGENOM" id="CLU_019840_0_0_1"/>
<dbReference type="InParanoid" id="Q6FU02"/>
<dbReference type="OMA" id="DCVFQTL"/>
<dbReference type="Proteomes" id="UP000002428">
    <property type="component" value="Chromosome F"/>
</dbReference>
<dbReference type="GO" id="GO:0005743">
    <property type="term" value="C:mitochondrial inner membrane"/>
    <property type="evidence" value="ECO:0007669"/>
    <property type="project" value="UniProtKB-SubCell"/>
</dbReference>
<dbReference type="GO" id="GO:0003730">
    <property type="term" value="F:mRNA 3'-UTR binding"/>
    <property type="evidence" value="ECO:0007669"/>
    <property type="project" value="EnsemblFungi"/>
</dbReference>
<dbReference type="GO" id="GO:0070935">
    <property type="term" value="P:3'-UTR-mediated mRNA stabilization"/>
    <property type="evidence" value="ECO:0007669"/>
    <property type="project" value="EnsemblFungi"/>
</dbReference>
<dbReference type="GO" id="GO:0009060">
    <property type="term" value="P:aerobic respiration"/>
    <property type="evidence" value="ECO:0007669"/>
    <property type="project" value="EnsemblFungi"/>
</dbReference>
<dbReference type="GO" id="GO:0090615">
    <property type="term" value="P:mitochondrial mRNA processing"/>
    <property type="evidence" value="ECO:0007669"/>
    <property type="project" value="EnsemblFungi"/>
</dbReference>
<dbReference type="GO" id="GO:1903108">
    <property type="term" value="P:regulation of mitochondrial transcription"/>
    <property type="evidence" value="ECO:0007669"/>
    <property type="project" value="EnsemblFungi"/>
</dbReference>
<dbReference type="GO" id="GO:0030435">
    <property type="term" value="P:sporulation resulting in formation of a cellular spore"/>
    <property type="evidence" value="ECO:0007669"/>
    <property type="project" value="UniProtKB-KW"/>
</dbReference>
<dbReference type="GO" id="GO:0006413">
    <property type="term" value="P:translational initiation"/>
    <property type="evidence" value="ECO:0007669"/>
    <property type="project" value="EnsemblFungi"/>
</dbReference>
<evidence type="ECO:0000250" key="1">
    <source>
        <dbReference type="UniProtKB" id="P53140"/>
    </source>
</evidence>
<evidence type="ECO:0000255" key="2"/>
<evidence type="ECO:0000256" key="3">
    <source>
        <dbReference type="SAM" id="MobiDB-lite"/>
    </source>
</evidence>
<evidence type="ECO:0000305" key="4"/>
<comment type="function">
    <text evidence="1">Binds the 3'-UTR of mitochondrial mRNAs. Involved in the processing or stability of mitochondrial mRNAs.</text>
</comment>
<comment type="subunit">
    <text evidence="1">Monomer.</text>
</comment>
<comment type="subcellular location">
    <subcellularLocation>
        <location evidence="1">Mitochondrion inner membrane</location>
        <topology evidence="1">Peripheral membrane protein</topology>
        <orientation evidence="1">Matrix side</orientation>
    </subcellularLocation>
</comment>
<comment type="PTM">
    <text evidence="1">Phosphorylated. Phosphorylation promotes binding to RNA.</text>
</comment>
<comment type="similarity">
    <text evidence="4">Belongs to the RMD9 family.</text>
</comment>
<accession>Q6FU02</accession>
<organism>
    <name type="scientific">Candida glabrata (strain ATCC 2001 / BCRC 20586 / JCM 3761 / NBRC 0622 / NRRL Y-65 / CBS 138)</name>
    <name type="common">Yeast</name>
    <name type="synonym">Nakaseomyces glabratus</name>
    <dbReference type="NCBI Taxonomy" id="284593"/>
    <lineage>
        <taxon>Eukaryota</taxon>
        <taxon>Fungi</taxon>
        <taxon>Dikarya</taxon>
        <taxon>Ascomycota</taxon>
        <taxon>Saccharomycotina</taxon>
        <taxon>Saccharomycetes</taxon>
        <taxon>Saccharomycetales</taxon>
        <taxon>Saccharomycetaceae</taxon>
        <taxon>Nakaseomyces</taxon>
    </lineage>
</organism>